<keyword id="KW-0012">Acyltransferase</keyword>
<keyword id="KW-0028">Amino-acid biosynthesis</keyword>
<keyword id="KW-0055">Arginine biosynthesis</keyword>
<keyword id="KW-0068">Autocatalytic cleavage</keyword>
<keyword id="KW-0963">Cytoplasm</keyword>
<keyword id="KW-0511">Multifunctional enzyme</keyword>
<keyword id="KW-1185">Reference proteome</keyword>
<keyword id="KW-0808">Transferase</keyword>
<accession>Q5HP22</accession>
<dbReference type="EC" id="2.3.1.35" evidence="1"/>
<dbReference type="EC" id="2.3.1.1" evidence="1"/>
<dbReference type="EMBL" id="CP000029">
    <property type="protein sequence ID" value="AAW54475.1"/>
    <property type="molecule type" value="Genomic_DNA"/>
</dbReference>
<dbReference type="RefSeq" id="WP_001831095.1">
    <property type="nucleotide sequence ID" value="NC_002976.3"/>
</dbReference>
<dbReference type="SMR" id="Q5HP22"/>
<dbReference type="STRING" id="176279.SERP1091"/>
<dbReference type="MEROPS" id="T05.002"/>
<dbReference type="GeneID" id="50018671"/>
<dbReference type="KEGG" id="ser:SERP1091"/>
<dbReference type="eggNOG" id="COG1364">
    <property type="taxonomic scope" value="Bacteria"/>
</dbReference>
<dbReference type="HOGENOM" id="CLU_027172_1_0_9"/>
<dbReference type="UniPathway" id="UPA00068">
    <property type="reaction ID" value="UER00106"/>
</dbReference>
<dbReference type="UniPathway" id="UPA00068">
    <property type="reaction ID" value="UER00111"/>
</dbReference>
<dbReference type="Proteomes" id="UP000000531">
    <property type="component" value="Chromosome"/>
</dbReference>
<dbReference type="GO" id="GO:0005737">
    <property type="term" value="C:cytoplasm"/>
    <property type="evidence" value="ECO:0007669"/>
    <property type="project" value="UniProtKB-SubCell"/>
</dbReference>
<dbReference type="GO" id="GO:0004358">
    <property type="term" value="F:glutamate N-acetyltransferase activity"/>
    <property type="evidence" value="ECO:0007669"/>
    <property type="project" value="UniProtKB-UniRule"/>
</dbReference>
<dbReference type="GO" id="GO:0004042">
    <property type="term" value="F:L-glutamate N-acetyltransferase activity"/>
    <property type="evidence" value="ECO:0007669"/>
    <property type="project" value="UniProtKB-UniRule"/>
</dbReference>
<dbReference type="GO" id="GO:0006526">
    <property type="term" value="P:L-arginine biosynthetic process"/>
    <property type="evidence" value="ECO:0007669"/>
    <property type="project" value="UniProtKB-UniRule"/>
</dbReference>
<dbReference type="GO" id="GO:0006592">
    <property type="term" value="P:ornithine biosynthetic process"/>
    <property type="evidence" value="ECO:0007669"/>
    <property type="project" value="TreeGrafter"/>
</dbReference>
<dbReference type="CDD" id="cd02152">
    <property type="entry name" value="OAT"/>
    <property type="match status" value="1"/>
</dbReference>
<dbReference type="FunFam" id="3.10.20.340:FF:000001">
    <property type="entry name" value="Arginine biosynthesis bifunctional protein ArgJ, chloroplastic"/>
    <property type="match status" value="1"/>
</dbReference>
<dbReference type="FunFam" id="3.60.70.12:FF:000001">
    <property type="entry name" value="Arginine biosynthesis bifunctional protein ArgJ, chloroplastic"/>
    <property type="match status" value="1"/>
</dbReference>
<dbReference type="FunFam" id="3.30.2330.10:FF:000001">
    <property type="entry name" value="Arginine biosynthesis bifunctional protein ArgJ, mitochondrial"/>
    <property type="match status" value="1"/>
</dbReference>
<dbReference type="Gene3D" id="3.30.2330.10">
    <property type="entry name" value="arginine biosynthesis bifunctional protein suprefamily"/>
    <property type="match status" value="1"/>
</dbReference>
<dbReference type="Gene3D" id="3.10.20.340">
    <property type="entry name" value="ArgJ beta chain, C-terminal domain"/>
    <property type="match status" value="1"/>
</dbReference>
<dbReference type="Gene3D" id="3.60.70.12">
    <property type="entry name" value="L-amino peptidase D-ALA esterase/amidase"/>
    <property type="match status" value="1"/>
</dbReference>
<dbReference type="HAMAP" id="MF_01106">
    <property type="entry name" value="ArgJ"/>
    <property type="match status" value="1"/>
</dbReference>
<dbReference type="InterPro" id="IPR002813">
    <property type="entry name" value="Arg_biosynth_ArgJ"/>
</dbReference>
<dbReference type="InterPro" id="IPR016117">
    <property type="entry name" value="ArgJ-like_dom_sf"/>
</dbReference>
<dbReference type="InterPro" id="IPR042195">
    <property type="entry name" value="ArgJ_beta_C"/>
</dbReference>
<dbReference type="NCBIfam" id="TIGR00120">
    <property type="entry name" value="ArgJ"/>
    <property type="match status" value="1"/>
</dbReference>
<dbReference type="NCBIfam" id="NF003802">
    <property type="entry name" value="PRK05388.1"/>
    <property type="match status" value="1"/>
</dbReference>
<dbReference type="PANTHER" id="PTHR23100">
    <property type="entry name" value="ARGININE BIOSYNTHESIS BIFUNCTIONAL PROTEIN ARGJ"/>
    <property type="match status" value="1"/>
</dbReference>
<dbReference type="PANTHER" id="PTHR23100:SF0">
    <property type="entry name" value="ARGININE BIOSYNTHESIS BIFUNCTIONAL PROTEIN ARGJ, MITOCHONDRIAL"/>
    <property type="match status" value="1"/>
</dbReference>
<dbReference type="Pfam" id="PF01960">
    <property type="entry name" value="ArgJ"/>
    <property type="match status" value="1"/>
</dbReference>
<dbReference type="SUPFAM" id="SSF56266">
    <property type="entry name" value="DmpA/ArgJ-like"/>
    <property type="match status" value="1"/>
</dbReference>
<proteinExistence type="inferred from homology"/>
<evidence type="ECO:0000255" key="1">
    <source>
        <dbReference type="HAMAP-Rule" id="MF_01106"/>
    </source>
</evidence>
<sequence>MNIIKGNIASPLGFSADGLHAGFKKKKLDFGWIVSEVPANVAGVFTTNKVIAAPLKLTKNSIEKSGKMQAIVVNSGIANSCTGKQGEKDAFKMQQLAANKLQIQPEYVGVASTGVIGKVMPMSILKNGFSKLVKNGNADDFAKAILTTDTHTKTCVVNEEFGSDTVTMAGVAKGSGMIHPNLATMLAFITCDANISSQTLQQALKDVVEVTFNQITVDGDTSTNDMVLVMSNGCTNNNEIKKDSEDYYKFKQMLLYIMTDLAKSIARDGEGASKLIEVTVKGAKESSAARMIAKSVVGSSLVKTAIFGEDPNWGRIIAAAGYAKTYFDINQVDIFIGRIPVLIRSSPVKYDKEEIQEIMSAEEISIQLDLHQGNCEGQAWGCDLSYDYVKINALYTT</sequence>
<reference key="1">
    <citation type="journal article" date="2005" name="J. Bacteriol.">
        <title>Insights on evolution of virulence and resistance from the complete genome analysis of an early methicillin-resistant Staphylococcus aureus strain and a biofilm-producing methicillin-resistant Staphylococcus epidermidis strain.</title>
        <authorList>
            <person name="Gill S.R."/>
            <person name="Fouts D.E."/>
            <person name="Archer G.L."/>
            <person name="Mongodin E.F."/>
            <person name="DeBoy R.T."/>
            <person name="Ravel J."/>
            <person name="Paulsen I.T."/>
            <person name="Kolonay J.F."/>
            <person name="Brinkac L.M."/>
            <person name="Beanan M.J."/>
            <person name="Dodson R.J."/>
            <person name="Daugherty S.C."/>
            <person name="Madupu R."/>
            <person name="Angiuoli S.V."/>
            <person name="Durkin A.S."/>
            <person name="Haft D.H."/>
            <person name="Vamathevan J.J."/>
            <person name="Khouri H."/>
            <person name="Utterback T.R."/>
            <person name="Lee C."/>
            <person name="Dimitrov G."/>
            <person name="Jiang L."/>
            <person name="Qin H."/>
            <person name="Weidman J."/>
            <person name="Tran K."/>
            <person name="Kang K.H."/>
            <person name="Hance I.R."/>
            <person name="Nelson K.E."/>
            <person name="Fraser C.M."/>
        </authorList>
    </citation>
    <scope>NUCLEOTIDE SEQUENCE [LARGE SCALE GENOMIC DNA]</scope>
    <source>
        <strain>ATCC 35984 / DSM 28319 / BCRC 17069 / CCUG 31568 / BM 3577 / RP62A</strain>
    </source>
</reference>
<gene>
    <name evidence="1" type="primary">argJ</name>
    <name type="ordered locus">SERP1091</name>
</gene>
<name>ARGJ_STAEQ</name>
<organism>
    <name type="scientific">Staphylococcus epidermidis (strain ATCC 35984 / DSM 28319 / BCRC 17069 / CCUG 31568 / BM 3577 / RP62A)</name>
    <dbReference type="NCBI Taxonomy" id="176279"/>
    <lineage>
        <taxon>Bacteria</taxon>
        <taxon>Bacillati</taxon>
        <taxon>Bacillota</taxon>
        <taxon>Bacilli</taxon>
        <taxon>Bacillales</taxon>
        <taxon>Staphylococcaceae</taxon>
        <taxon>Staphylococcus</taxon>
    </lineage>
</organism>
<protein>
    <recommendedName>
        <fullName evidence="1">Arginine biosynthesis bifunctional protein ArgJ</fullName>
    </recommendedName>
    <domain>
        <recommendedName>
            <fullName evidence="1">Glutamate N-acetyltransferase</fullName>
            <ecNumber evidence="1">2.3.1.35</ecNumber>
        </recommendedName>
        <alternativeName>
            <fullName evidence="1">Ornithine acetyltransferase</fullName>
            <shortName evidence="1">OATase</shortName>
        </alternativeName>
        <alternativeName>
            <fullName evidence="1">Ornithine transacetylase</fullName>
        </alternativeName>
    </domain>
    <domain>
        <recommendedName>
            <fullName evidence="1">Amino-acid acetyltransferase</fullName>
            <ecNumber evidence="1">2.3.1.1</ecNumber>
        </recommendedName>
        <alternativeName>
            <fullName evidence="1">N-acetylglutamate synthase</fullName>
            <shortName evidence="1">AGSase</shortName>
        </alternativeName>
    </domain>
    <component>
        <recommendedName>
            <fullName evidence="1">Arginine biosynthesis bifunctional protein ArgJ alpha chain</fullName>
        </recommendedName>
    </component>
    <component>
        <recommendedName>
            <fullName evidence="1">Arginine biosynthesis bifunctional protein ArgJ beta chain</fullName>
        </recommendedName>
    </component>
</protein>
<comment type="function">
    <text evidence="1">Catalyzes two activities which are involved in the cyclic version of arginine biosynthesis: the synthesis of N-acetylglutamate from glutamate and acetyl-CoA as the acetyl donor, and of ornithine by transacetylation between N(2)-acetylornithine and glutamate.</text>
</comment>
<comment type="catalytic activity">
    <reaction evidence="1">
        <text>N(2)-acetyl-L-ornithine + L-glutamate = N-acetyl-L-glutamate + L-ornithine</text>
        <dbReference type="Rhea" id="RHEA:15349"/>
        <dbReference type="ChEBI" id="CHEBI:29985"/>
        <dbReference type="ChEBI" id="CHEBI:44337"/>
        <dbReference type="ChEBI" id="CHEBI:46911"/>
        <dbReference type="ChEBI" id="CHEBI:57805"/>
        <dbReference type="EC" id="2.3.1.35"/>
    </reaction>
</comment>
<comment type="catalytic activity">
    <reaction evidence="1">
        <text>L-glutamate + acetyl-CoA = N-acetyl-L-glutamate + CoA + H(+)</text>
        <dbReference type="Rhea" id="RHEA:24292"/>
        <dbReference type="ChEBI" id="CHEBI:15378"/>
        <dbReference type="ChEBI" id="CHEBI:29985"/>
        <dbReference type="ChEBI" id="CHEBI:44337"/>
        <dbReference type="ChEBI" id="CHEBI:57287"/>
        <dbReference type="ChEBI" id="CHEBI:57288"/>
        <dbReference type="EC" id="2.3.1.1"/>
    </reaction>
</comment>
<comment type="pathway">
    <text evidence="1">Amino-acid biosynthesis; L-arginine biosynthesis; L-ornithine and N-acetyl-L-glutamate from L-glutamate and N(2)-acetyl-L-ornithine (cyclic): step 1/1.</text>
</comment>
<comment type="pathway">
    <text evidence="1">Amino-acid biosynthesis; L-arginine biosynthesis; N(2)-acetyl-L-ornithine from L-glutamate: step 1/4.</text>
</comment>
<comment type="subunit">
    <text evidence="1">Heterotetramer of two alpha and two beta chains.</text>
</comment>
<comment type="subcellular location">
    <subcellularLocation>
        <location evidence="1">Cytoplasm</location>
    </subcellularLocation>
</comment>
<comment type="similarity">
    <text evidence="1">Belongs to the ArgJ family.</text>
</comment>
<feature type="chain" id="PRO_0000042892" description="Arginine biosynthesis bifunctional protein ArgJ alpha chain" evidence="1">
    <location>
        <begin position="1"/>
        <end position="183"/>
    </location>
</feature>
<feature type="chain" id="PRO_0000042893" description="Arginine biosynthesis bifunctional protein ArgJ beta chain" evidence="1">
    <location>
        <begin position="184"/>
        <end position="397"/>
    </location>
</feature>
<feature type="active site" description="Nucleophile" evidence="1">
    <location>
        <position position="184"/>
    </location>
</feature>
<feature type="binding site" evidence="1">
    <location>
        <position position="147"/>
    </location>
    <ligand>
        <name>substrate</name>
    </ligand>
</feature>
<feature type="binding site" evidence="1">
    <location>
        <position position="173"/>
    </location>
    <ligand>
        <name>substrate</name>
    </ligand>
</feature>
<feature type="binding site" evidence="1">
    <location>
        <position position="184"/>
    </location>
    <ligand>
        <name>substrate</name>
    </ligand>
</feature>
<feature type="binding site" evidence="1">
    <location>
        <position position="270"/>
    </location>
    <ligand>
        <name>substrate</name>
    </ligand>
</feature>
<feature type="binding site" evidence="1">
    <location>
        <position position="392"/>
    </location>
    <ligand>
        <name>substrate</name>
    </ligand>
</feature>
<feature type="binding site" evidence="1">
    <location>
        <position position="397"/>
    </location>
    <ligand>
        <name>substrate</name>
    </ligand>
</feature>
<feature type="site" description="Involved in the stabilization of negative charge on the oxyanion by the formation of the oxyanion hole" evidence="1">
    <location>
        <position position="113"/>
    </location>
</feature>
<feature type="site" description="Involved in the stabilization of negative charge on the oxyanion by the formation of the oxyanion hole" evidence="1">
    <location>
        <position position="114"/>
    </location>
</feature>
<feature type="site" description="Cleavage; by autolysis" evidence="1">
    <location>
        <begin position="183"/>
        <end position="184"/>
    </location>
</feature>